<accession>P31808</accession>
<accession>P77516</accession>
<feature type="chain" id="PRO_0000054824" description="Uncharacterized oxidoreductase YciK">
    <location>
        <begin position="1"/>
        <end position="252"/>
    </location>
</feature>
<feature type="active site" description="Proton acceptor" evidence="2">
    <location>
        <position position="165"/>
    </location>
</feature>
<feature type="binding site" evidence="1">
    <location>
        <begin position="16"/>
        <end position="40"/>
    </location>
    <ligand>
        <name>NADP(+)</name>
        <dbReference type="ChEBI" id="CHEBI:58349"/>
    </ligand>
</feature>
<feature type="binding site" evidence="1">
    <location>
        <position position="152"/>
    </location>
    <ligand>
        <name>substrate</name>
    </ligand>
</feature>
<feature type="sequence conflict" description="In Ref. 5." evidence="3" ref="5">
    <original>Q</original>
    <variation>P</variation>
    <location>
        <position position="63"/>
    </location>
</feature>
<feature type="turn" evidence="5">
    <location>
        <begin position="7"/>
        <end position="12"/>
    </location>
</feature>
<feature type="strand" evidence="5">
    <location>
        <begin position="14"/>
        <end position="19"/>
    </location>
</feature>
<feature type="helix" evidence="5">
    <location>
        <begin position="23"/>
        <end position="34"/>
    </location>
</feature>
<feature type="strand" evidence="5">
    <location>
        <begin position="38"/>
        <end position="44"/>
    </location>
</feature>
<feature type="helix" evidence="5">
    <location>
        <begin position="46"/>
        <end position="60"/>
    </location>
</feature>
<feature type="strand" evidence="5">
    <location>
        <begin position="65"/>
        <end position="68"/>
    </location>
</feature>
<feature type="turn" evidence="5">
    <location>
        <begin position="71"/>
        <end position="73"/>
    </location>
</feature>
<feature type="helix" evidence="5">
    <location>
        <begin position="76"/>
        <end position="89"/>
    </location>
</feature>
<feature type="strand" evidence="5">
    <location>
        <begin position="94"/>
        <end position="98"/>
    </location>
</feature>
<feature type="turn" evidence="5">
    <location>
        <begin position="109"/>
        <end position="111"/>
    </location>
</feature>
<feature type="helix" evidence="5">
    <location>
        <begin position="114"/>
        <end position="124"/>
    </location>
</feature>
<feature type="helix" evidence="5">
    <location>
        <begin position="126"/>
        <end position="140"/>
    </location>
</feature>
<feature type="strand" evidence="5">
    <location>
        <begin position="142"/>
        <end position="144"/>
    </location>
</feature>
<feature type="strand" evidence="5">
    <location>
        <begin position="146"/>
        <end position="150"/>
    </location>
</feature>
<feature type="helix" evidence="5">
    <location>
        <begin position="153"/>
        <end position="155"/>
    </location>
</feature>
<feature type="helix" evidence="5">
    <location>
        <begin position="163"/>
        <end position="182"/>
    </location>
</feature>
<feature type="turn" evidence="5">
    <location>
        <begin position="183"/>
        <end position="186"/>
    </location>
</feature>
<feature type="strand" evidence="5">
    <location>
        <begin position="188"/>
        <end position="193"/>
    </location>
</feature>
<feature type="strand" evidence="5">
    <location>
        <begin position="196"/>
        <end position="199"/>
    </location>
</feature>
<feature type="helix" evidence="5">
    <location>
        <begin position="200"/>
        <end position="205"/>
    </location>
</feature>
<feature type="strand" evidence="4">
    <location>
        <begin position="207"/>
        <end position="209"/>
    </location>
</feature>
<feature type="helix" evidence="5">
    <location>
        <begin position="211"/>
        <end position="213"/>
    </location>
</feature>
<feature type="helix" evidence="5">
    <location>
        <begin position="218"/>
        <end position="220"/>
    </location>
</feature>
<feature type="helix" evidence="5">
    <location>
        <begin position="221"/>
        <end position="228"/>
    </location>
</feature>
<feature type="helix" evidence="5">
    <location>
        <begin position="230"/>
        <end position="232"/>
    </location>
</feature>
<feature type="strand" evidence="5">
    <location>
        <begin position="239"/>
        <end position="243"/>
    </location>
</feature>
<feature type="strand" evidence="4">
    <location>
        <begin position="248"/>
        <end position="250"/>
    </location>
</feature>
<protein>
    <recommendedName>
        <fullName>Uncharacterized oxidoreductase YciK</fullName>
        <ecNumber>1.-.-.-</ecNumber>
    </recommendedName>
</protein>
<sequence length="252" mass="27933">MHYQPKQDLLNDRIILVTGASDGIGREAAMTYARYGATVILLGRNEEKLRQVASHINEETGRQPQWFILDLLTCTSENCQQLAQRIAVNYPRLDGVLHNAGLLGDVCPMSEQNPQVWQDVMQVNVNATFMLTQALLPLLLKSDAGSLVFTSSSVGRQGRANWGAYAASKFATEGMMQVLADEYQQRLRVNCINPGGTRTAMRASAFPTEDPQKLKTPADIMPLYLWLMGDDSRRKTGMTFDAQPGRKPGISQ</sequence>
<evidence type="ECO:0000250" key="1"/>
<evidence type="ECO:0000255" key="2">
    <source>
        <dbReference type="PROSITE-ProRule" id="PRU10001"/>
    </source>
</evidence>
<evidence type="ECO:0000305" key="3"/>
<evidence type="ECO:0007829" key="4">
    <source>
        <dbReference type="PDB" id="3F1K"/>
    </source>
</evidence>
<evidence type="ECO:0007829" key="5">
    <source>
        <dbReference type="PDB" id="3F1L"/>
    </source>
</evidence>
<gene>
    <name type="primary">yciK</name>
    <name type="ordered locus">b1271</name>
    <name type="ordered locus">JW1263</name>
</gene>
<name>YCIK_ECOLI</name>
<dbReference type="EC" id="1.-.-.-"/>
<dbReference type="EMBL" id="U00096">
    <property type="protein sequence ID" value="AAC74353.1"/>
    <property type="molecule type" value="Genomic_DNA"/>
</dbReference>
<dbReference type="EMBL" id="AP009048">
    <property type="protein sequence ID" value="BAA14808.1"/>
    <property type="molecule type" value="Genomic_DNA"/>
</dbReference>
<dbReference type="EMBL" id="U17433">
    <property type="protein sequence ID" value="AAB59992.1"/>
    <property type="status" value="ALT_FRAME"/>
    <property type="molecule type" value="Genomic_DNA"/>
</dbReference>
<dbReference type="EMBL" id="U17433">
    <property type="protein sequence ID" value="AAB59991.1"/>
    <property type="status" value="ALT_FRAME"/>
    <property type="molecule type" value="Genomic_DNA"/>
</dbReference>
<dbReference type="EMBL" id="M73320">
    <property type="status" value="NOT_ANNOTATED_CDS"/>
    <property type="molecule type" value="Genomic_DNA"/>
</dbReference>
<dbReference type="PIR" id="B64875">
    <property type="entry name" value="B64875"/>
</dbReference>
<dbReference type="RefSeq" id="NP_415787.1">
    <property type="nucleotide sequence ID" value="NC_000913.3"/>
</dbReference>
<dbReference type="RefSeq" id="WP_000559286.1">
    <property type="nucleotide sequence ID" value="NZ_SSZK01000031.1"/>
</dbReference>
<dbReference type="PDB" id="3E9Q">
    <property type="method" value="X-ray"/>
    <property type="resolution" value="1.70 A"/>
    <property type="chains" value="A/B=1-252"/>
</dbReference>
<dbReference type="PDB" id="3F1K">
    <property type="method" value="X-ray"/>
    <property type="resolution" value="2.60 A"/>
    <property type="chains" value="A=1-252"/>
</dbReference>
<dbReference type="PDB" id="3F1L">
    <property type="method" value="X-ray"/>
    <property type="resolution" value="0.95 A"/>
    <property type="chains" value="A/B=1-252"/>
</dbReference>
<dbReference type="PDBsum" id="3E9Q"/>
<dbReference type="PDBsum" id="3F1K"/>
<dbReference type="PDBsum" id="3F1L"/>
<dbReference type="SMR" id="P31808"/>
<dbReference type="BioGRID" id="4259576">
    <property type="interactions" value="53"/>
</dbReference>
<dbReference type="FunCoup" id="P31808">
    <property type="interactions" value="107"/>
</dbReference>
<dbReference type="IntAct" id="P31808">
    <property type="interactions" value="6"/>
</dbReference>
<dbReference type="STRING" id="511145.b1271"/>
<dbReference type="jPOST" id="P31808"/>
<dbReference type="PaxDb" id="511145-b1271"/>
<dbReference type="EnsemblBacteria" id="AAC74353">
    <property type="protein sequence ID" value="AAC74353"/>
    <property type="gene ID" value="b1271"/>
</dbReference>
<dbReference type="GeneID" id="945838"/>
<dbReference type="KEGG" id="ecj:JW1263"/>
<dbReference type="KEGG" id="eco:b1271"/>
<dbReference type="KEGG" id="ecoc:C3026_07445"/>
<dbReference type="PATRIC" id="fig|1411691.4.peg.1013"/>
<dbReference type="EchoBASE" id="EB1709"/>
<dbReference type="eggNOG" id="COG1028">
    <property type="taxonomic scope" value="Bacteria"/>
</dbReference>
<dbReference type="HOGENOM" id="CLU_010194_2_10_6"/>
<dbReference type="InParanoid" id="P31808"/>
<dbReference type="OMA" id="PLYLHLM"/>
<dbReference type="OrthoDB" id="9790785at2"/>
<dbReference type="PhylomeDB" id="P31808"/>
<dbReference type="BioCyc" id="EcoCyc:EG11759-MONOMER"/>
<dbReference type="EvolutionaryTrace" id="P31808"/>
<dbReference type="PRO" id="PR:P31808"/>
<dbReference type="Proteomes" id="UP000000625">
    <property type="component" value="Chromosome"/>
</dbReference>
<dbReference type="GO" id="GO:0016491">
    <property type="term" value="F:oxidoreductase activity"/>
    <property type="evidence" value="ECO:0007669"/>
    <property type="project" value="UniProtKB-KW"/>
</dbReference>
<dbReference type="CDD" id="cd05340">
    <property type="entry name" value="Ycik_SDR_c"/>
    <property type="match status" value="1"/>
</dbReference>
<dbReference type="FunFam" id="3.40.50.720:FF:000250">
    <property type="entry name" value="YciK family oxidoreductase"/>
    <property type="match status" value="1"/>
</dbReference>
<dbReference type="Gene3D" id="3.40.50.720">
    <property type="entry name" value="NAD(P)-binding Rossmann-like Domain"/>
    <property type="match status" value="1"/>
</dbReference>
<dbReference type="InterPro" id="IPR036291">
    <property type="entry name" value="NAD(P)-bd_dom_sf"/>
</dbReference>
<dbReference type="InterPro" id="IPR020904">
    <property type="entry name" value="Sc_DH/Rdtase_CS"/>
</dbReference>
<dbReference type="InterPro" id="IPR002347">
    <property type="entry name" value="SDR_fam"/>
</dbReference>
<dbReference type="InterPro" id="IPR049572">
    <property type="entry name" value="YciK"/>
</dbReference>
<dbReference type="NCBIfam" id="NF006509">
    <property type="entry name" value="PRK08945.1"/>
    <property type="match status" value="1"/>
</dbReference>
<dbReference type="PANTHER" id="PTHR42901">
    <property type="entry name" value="ALCOHOL DEHYDROGENASE"/>
    <property type="match status" value="1"/>
</dbReference>
<dbReference type="PANTHER" id="PTHR42901:SF1">
    <property type="entry name" value="ALCOHOL DEHYDROGENASE"/>
    <property type="match status" value="1"/>
</dbReference>
<dbReference type="Pfam" id="PF00106">
    <property type="entry name" value="adh_short"/>
    <property type="match status" value="1"/>
</dbReference>
<dbReference type="PRINTS" id="PR00081">
    <property type="entry name" value="GDHRDH"/>
</dbReference>
<dbReference type="SMART" id="SM00822">
    <property type="entry name" value="PKS_KR"/>
    <property type="match status" value="1"/>
</dbReference>
<dbReference type="SUPFAM" id="SSF51735">
    <property type="entry name" value="NAD(P)-binding Rossmann-fold domains"/>
    <property type="match status" value="1"/>
</dbReference>
<dbReference type="PROSITE" id="PS00061">
    <property type="entry name" value="ADH_SHORT"/>
    <property type="match status" value="1"/>
</dbReference>
<reference key="1">
    <citation type="journal article" date="1996" name="DNA Res.">
        <title>A 570-kb DNA sequence of the Escherichia coli K-12 genome corresponding to the 28.0-40.1 min region on the linkage map.</title>
        <authorList>
            <person name="Aiba H."/>
            <person name="Baba T."/>
            <person name="Fujita K."/>
            <person name="Hayashi K."/>
            <person name="Inada T."/>
            <person name="Isono K."/>
            <person name="Itoh T."/>
            <person name="Kasai H."/>
            <person name="Kashimoto K."/>
            <person name="Kimura S."/>
            <person name="Kitakawa M."/>
            <person name="Kitagawa M."/>
            <person name="Makino K."/>
            <person name="Miki T."/>
            <person name="Mizobuchi K."/>
            <person name="Mori H."/>
            <person name="Mori T."/>
            <person name="Motomura K."/>
            <person name="Nakade S."/>
            <person name="Nakamura Y."/>
            <person name="Nashimoto H."/>
            <person name="Nishio Y."/>
            <person name="Oshima T."/>
            <person name="Saito N."/>
            <person name="Sampei G."/>
            <person name="Seki Y."/>
            <person name="Sivasundaram S."/>
            <person name="Tagami H."/>
            <person name="Takeda J."/>
            <person name="Takemoto K."/>
            <person name="Takeuchi Y."/>
            <person name="Wada C."/>
            <person name="Yamamoto Y."/>
            <person name="Horiuchi T."/>
        </authorList>
    </citation>
    <scope>NUCLEOTIDE SEQUENCE [LARGE SCALE GENOMIC DNA]</scope>
    <source>
        <strain>K12 / W3110 / ATCC 27325 / DSM 5911</strain>
    </source>
</reference>
<reference key="2">
    <citation type="journal article" date="1997" name="Science">
        <title>The complete genome sequence of Escherichia coli K-12.</title>
        <authorList>
            <person name="Blattner F.R."/>
            <person name="Plunkett G. III"/>
            <person name="Bloch C.A."/>
            <person name="Perna N.T."/>
            <person name="Burland V."/>
            <person name="Riley M."/>
            <person name="Collado-Vides J."/>
            <person name="Glasner J.D."/>
            <person name="Rode C.K."/>
            <person name="Mayhew G.F."/>
            <person name="Gregor J."/>
            <person name="Davis N.W."/>
            <person name="Kirkpatrick H.A."/>
            <person name="Goeden M.A."/>
            <person name="Rose D.J."/>
            <person name="Mau B."/>
            <person name="Shao Y."/>
        </authorList>
    </citation>
    <scope>NUCLEOTIDE SEQUENCE [LARGE SCALE GENOMIC DNA]</scope>
    <source>
        <strain>K12 / MG1655 / ATCC 47076</strain>
    </source>
</reference>
<reference key="3">
    <citation type="journal article" date="2006" name="Mol. Syst. Biol.">
        <title>Highly accurate genome sequences of Escherichia coli K-12 strains MG1655 and W3110.</title>
        <authorList>
            <person name="Hayashi K."/>
            <person name="Morooka N."/>
            <person name="Yamamoto Y."/>
            <person name="Fujita K."/>
            <person name="Isono K."/>
            <person name="Choi S."/>
            <person name="Ohtsubo E."/>
            <person name="Baba T."/>
            <person name="Wanner B.L."/>
            <person name="Mori H."/>
            <person name="Horiuchi T."/>
        </authorList>
    </citation>
    <scope>NUCLEOTIDE SEQUENCE [LARGE SCALE GENOMIC DNA]</scope>
    <source>
        <strain>K12 / W3110 / ATCC 27325 / DSM 5911</strain>
    </source>
</reference>
<reference key="4">
    <citation type="submission" date="1994-11" db="EMBL/GenBank/DDBJ databases">
        <authorList>
            <person name="Milkman R."/>
            <person name="McKane M."/>
        </authorList>
    </citation>
    <scope>NUCLEOTIDE SEQUENCE [GENOMIC DNA]</scope>
    <source>
        <strain>K12 / W3110 / ATCC 27325 / DSM 5911</strain>
    </source>
</reference>
<reference key="5">
    <citation type="journal article" date="1991" name="J. Bacteriol.">
        <title>Identification of the Escherichia coli sohB gene, a multicopy suppressor of the HtrA (DegP) null phenotype.</title>
        <authorList>
            <person name="Baird L."/>
            <person name="Lipinska B."/>
            <person name="Raina S."/>
            <person name="Georgopoulos C."/>
        </authorList>
    </citation>
    <scope>NUCLEOTIDE SEQUENCE [GENOMIC DNA] OF 1-63</scope>
</reference>
<proteinExistence type="evidence at protein level"/>
<comment type="similarity">
    <text evidence="3">Belongs to the short-chain dehydrogenases/reductases (SDR) family.</text>
</comment>
<comment type="sequence caution" evidence="3">
    <conflict type="frameshift">
        <sequence resource="EMBL-CDS" id="AAB59991"/>
    </conflict>
</comment>
<comment type="sequence caution" evidence="3">
    <conflict type="frameshift">
        <sequence resource="EMBL-CDS" id="AAB59992"/>
    </conflict>
</comment>
<organism>
    <name type="scientific">Escherichia coli (strain K12)</name>
    <dbReference type="NCBI Taxonomy" id="83333"/>
    <lineage>
        <taxon>Bacteria</taxon>
        <taxon>Pseudomonadati</taxon>
        <taxon>Pseudomonadota</taxon>
        <taxon>Gammaproteobacteria</taxon>
        <taxon>Enterobacterales</taxon>
        <taxon>Enterobacteriaceae</taxon>
        <taxon>Escherichia</taxon>
    </lineage>
</organism>
<keyword id="KW-0002">3D-structure</keyword>
<keyword id="KW-0560">Oxidoreductase</keyword>
<keyword id="KW-1185">Reference proteome</keyword>